<accession>B7ZR65</accession>
<accession>B7ZR67</accession>
<accession>Q90YL1</accession>
<reference evidence="15 17" key="1">
    <citation type="journal article" date="2002" name="Development">
        <title>The transcription factor Sox9 is required for cranial neural crest development in Xenopus.</title>
        <authorList>
            <person name="Spokony R.F."/>
            <person name="Aoki Y."/>
            <person name="Saint-Germain N."/>
            <person name="Magner-Fink E."/>
            <person name="Saint-Jeannet J.-P."/>
        </authorList>
    </citation>
    <scope>NUCLEOTIDE SEQUENCE [MRNA]</scope>
    <scope>FUNCTION</scope>
    <scope>SUBCELLULAR LOCATION</scope>
    <scope>TISSUE SPECIFICITY</scope>
    <scope>DEVELOPMENTAL STAGE</scope>
    <scope>DISRUPTION PHENOTYPE</scope>
</reference>
<reference evidence="16" key="2">
    <citation type="submission" date="2008-11" db="EMBL/GenBank/DDBJ databases">
        <authorList>
            <consortium name="NIH - Xenopus Gene Collection (XGC) project"/>
        </authorList>
    </citation>
    <scope>NUCLEOTIDE SEQUENCE [LARGE SCALE MRNA]</scope>
    <source>
        <tissue evidence="16">Gastrula</tissue>
    </source>
</reference>
<reference evidence="15" key="3">
    <citation type="journal article" date="2003" name="Dev. Biol.">
        <title>Sox10 regulates the development of neural crest-derived melanocytes in Xenopus.</title>
        <authorList>
            <person name="Aoki Y."/>
            <person name="Saint-Germain N."/>
            <person name="Gyda M."/>
            <person name="Magner-Fink E."/>
            <person name="Lee Y.-H."/>
            <person name="Credidio C."/>
            <person name="Saint-Jeannet J.-P."/>
        </authorList>
    </citation>
    <scope>FUNCTION</scope>
    <scope>TISSUE SPECIFICITY</scope>
</reference>
<reference evidence="15" key="4">
    <citation type="journal article" date="2003" name="Dev. Biol.">
        <title>Sox10 is required for the early development of the prospective neural crest in Xenopus embryos.</title>
        <authorList>
            <person name="Honore S.M."/>
            <person name="Aybar M.J."/>
            <person name="Mayor R."/>
        </authorList>
    </citation>
    <scope>TISSUE SPECIFICITY</scope>
</reference>
<reference evidence="15" key="5">
    <citation type="journal article" date="2003" name="Int. J. Dev. Biol.">
        <title>Sox9, a novel pancreatic marker in Xenopus.</title>
        <authorList>
            <person name="Lee Y.-H."/>
            <person name="Saint-Jeannet J.-P."/>
        </authorList>
    </citation>
    <scope>TISSUE SPECIFICITY</scope>
</reference>
<reference evidence="15" key="6">
    <citation type="journal article" date="2004" name="Development">
        <title>Specification of the otic placode depends on Sox9 function in Xenopus.</title>
        <authorList>
            <person name="Saint-Germain N."/>
            <person name="Lee Y.-H."/>
            <person name="Zhang Y."/>
            <person name="Sargent T.D."/>
            <person name="Saint-Jeannet J.-P."/>
        </authorList>
    </citation>
    <scope>FUNCTION</scope>
    <scope>TISSUE SPECIFICITY</scope>
</reference>
<reference evidence="15" key="7">
    <citation type="journal article" date="2004" name="Dev. Biol.">
        <title>Early requirement of the transcriptional activator Sox9 for neural crest specification in Xenopus.</title>
        <authorList>
            <person name="Lee Y.-H."/>
            <person name="Aoki Y."/>
            <person name="Hong C.-S."/>
            <person name="Saint-Germain N."/>
            <person name="Credidio C."/>
            <person name="Saint-Jeannet J.-P."/>
        </authorList>
    </citation>
    <scope>FUNCTION</scope>
</reference>
<reference evidence="15" key="8">
    <citation type="journal article" date="2005" name="Dev. Cell">
        <title>SoxE factors function equivalently during neural crest and inner ear development and their activity is regulated by SUMOylation.</title>
        <authorList>
            <person name="Taylor K.M."/>
            <person name="Labonne C."/>
        </authorList>
    </citation>
    <scope>FUNCTION</scope>
    <scope>INTERACTION WITH UBE2I AND SMO1</scope>
    <scope>SUMOYLATION AT LYS-61 AND LYS-365</scope>
    <scope>MUTAGENESIS OF LYS-61 AND LYS-365</scope>
</reference>
<reference evidence="15" key="9">
    <citation type="journal article" date="2006" name="Development">
        <title>Functional analysis of Sox8 during neural crest development in Xenopus.</title>
        <authorList>
            <person name="O'Donnell M."/>
            <person name="Hong C.-S."/>
            <person name="Huang X."/>
            <person name="Delnicki R.J."/>
            <person name="Saint-Jeannet J.-P."/>
        </authorList>
    </citation>
    <scope>FUNCTION</scope>
    <scope>TISSUE SPECIFICITY</scope>
</reference>
<reference evidence="15" key="10">
    <citation type="journal article" date="2008" name="Chromosome Res.">
        <title>Diversity in the origins of sex chromosomes in anurans inferred from comparative mapping of sexual differentiation genes for three species of the Raninae and Xenopodinae.</title>
        <authorList>
            <person name="Uno Y."/>
            <person name="Nishida C."/>
            <person name="Yoshimoto S."/>
            <person name="Ito M."/>
            <person name="Oshima Y."/>
            <person name="Yokoyama S."/>
            <person name="Nakamura M."/>
            <person name="Matsuda Y."/>
        </authorList>
    </citation>
    <scope>IDENTIFICATION</scope>
</reference>
<sequence>MNLLDPFMKMTEEQDKCMSGAPSPTMSDDSAGSPCPSGSGSDTENTRPQENTFPKGDQELKKETEDEKFPVCIREAVSQVLKGYDWTLVPMPVRVNGSSKNKPHVKRPMNAFMVWAQAARRKLADQYPHLHNAELSKTLGKLWRLLNEGEKRPFVEEAERLRVQHKKDHPDYKYQPRRRKSVKNGQTEQEDGAEQTHISPNAIFKALQADSPHSSSSMSEVHSPGEHSGQSQGPPTPPTTPKTDIQPGKPDLKREGRPLQENGRQPPHIDFRDVDIGELSSEVISTIETFDVNEFDQYLPPNGHPGVGSTQASYTGSYGISSTPSATTGAGPAWMSKQQQQQPQQHSLSTLNSEQSQSQQRTHIKTEQLSPSHYSDQQQQHSPQQLNYSSFNLQHYSSSYPTITRAQYDYTEHQGSSTYYSHASGQNSGLYSTFSYMNPSQRPLYTPIADTTGVPSIPQTHSPQHWEQPVYTQLTRP</sequence>
<keyword id="KW-0010">Activator</keyword>
<keyword id="KW-0891">Chondrogenesis</keyword>
<keyword id="KW-0963">Cytoplasm</keyword>
<keyword id="KW-0217">Developmental protein</keyword>
<keyword id="KW-0221">Differentiation</keyword>
<keyword id="KW-0238">DNA-binding</keyword>
<keyword id="KW-0334">Gonadal differentiation</keyword>
<keyword id="KW-1017">Isopeptide bond</keyword>
<keyword id="KW-0539">Nucleus</keyword>
<keyword id="KW-1185">Reference proteome</keyword>
<keyword id="KW-0804">Transcription</keyword>
<keyword id="KW-0805">Transcription regulation</keyword>
<keyword id="KW-0832">Ubl conjugation</keyword>
<dbReference type="EMBL" id="AY035397">
    <property type="protein sequence ID" value="AAK61366.1"/>
    <property type="molecule type" value="mRNA"/>
</dbReference>
<dbReference type="EMBL" id="BC170058">
    <property type="protein sequence ID" value="AAI70058.1"/>
    <property type="molecule type" value="mRNA"/>
</dbReference>
<dbReference type="EMBL" id="BC170060">
    <property type="protein sequence ID" value="AAI70060.1"/>
    <property type="molecule type" value="mRNA"/>
</dbReference>
<dbReference type="RefSeq" id="NP_001084276.1">
    <property type="nucleotide sequence ID" value="NM_001090807.1"/>
</dbReference>
<dbReference type="SMR" id="B7ZR65"/>
<dbReference type="GeneID" id="399405"/>
<dbReference type="KEGG" id="xla:399405"/>
<dbReference type="AGR" id="Xenbase:XB-GENE-6253910"/>
<dbReference type="CTD" id="399405"/>
<dbReference type="Xenbase" id="XB-GENE-6253910">
    <property type="gene designation" value="sox9.S"/>
</dbReference>
<dbReference type="OMA" id="QSSNSYY"/>
<dbReference type="OrthoDB" id="6247875at2759"/>
<dbReference type="Proteomes" id="UP000186698">
    <property type="component" value="Chromosome 9_10S"/>
</dbReference>
<dbReference type="Bgee" id="399405">
    <property type="expression patterns" value="Expressed in internal ear and 14 other cell types or tissues"/>
</dbReference>
<dbReference type="GO" id="GO:0005737">
    <property type="term" value="C:cytoplasm"/>
    <property type="evidence" value="ECO:0000250"/>
    <property type="project" value="UniProtKB"/>
</dbReference>
<dbReference type="GO" id="GO:0005634">
    <property type="term" value="C:nucleus"/>
    <property type="evidence" value="ECO:0000314"/>
    <property type="project" value="UniProtKB"/>
</dbReference>
<dbReference type="GO" id="GO:0003677">
    <property type="term" value="F:DNA binding"/>
    <property type="evidence" value="ECO:0000250"/>
    <property type="project" value="UniProtKB"/>
</dbReference>
<dbReference type="GO" id="GO:0000981">
    <property type="term" value="F:DNA-binding transcription factor activity, RNA polymerase II-specific"/>
    <property type="evidence" value="ECO:0000318"/>
    <property type="project" value="GO_Central"/>
</dbReference>
<dbReference type="GO" id="GO:0000978">
    <property type="term" value="F:RNA polymerase II cis-regulatory region sequence-specific DNA binding"/>
    <property type="evidence" value="ECO:0000318"/>
    <property type="project" value="GO_Central"/>
</dbReference>
<dbReference type="GO" id="GO:0043565">
    <property type="term" value="F:sequence-specific DNA binding"/>
    <property type="evidence" value="ECO:0000250"/>
    <property type="project" value="UniProtKB"/>
</dbReference>
<dbReference type="GO" id="GO:0044389">
    <property type="term" value="F:ubiquitin-like protein ligase binding"/>
    <property type="evidence" value="ECO:0000353"/>
    <property type="project" value="UniProtKB"/>
</dbReference>
<dbReference type="GO" id="GO:0051216">
    <property type="term" value="P:cartilage development"/>
    <property type="evidence" value="ECO:0000250"/>
    <property type="project" value="UniProtKB"/>
</dbReference>
<dbReference type="GO" id="GO:0002062">
    <property type="term" value="P:chondrocyte differentiation"/>
    <property type="evidence" value="ECO:0000250"/>
    <property type="project" value="UniProtKB"/>
</dbReference>
<dbReference type="GO" id="GO:0007506">
    <property type="term" value="P:gonadal mesoderm development"/>
    <property type="evidence" value="ECO:0007669"/>
    <property type="project" value="UniProtKB-KW"/>
</dbReference>
<dbReference type="GO" id="GO:0003430">
    <property type="term" value="P:growth plate cartilage chondrocyte growth"/>
    <property type="evidence" value="ECO:0000250"/>
    <property type="project" value="UniProtKB"/>
</dbReference>
<dbReference type="GO" id="GO:0007507">
    <property type="term" value="P:heart development"/>
    <property type="evidence" value="ECO:0000318"/>
    <property type="project" value="GO_Central"/>
</dbReference>
<dbReference type="GO" id="GO:0002009">
    <property type="term" value="P:morphogenesis of an epithelium"/>
    <property type="evidence" value="ECO:0000318"/>
    <property type="project" value="GO_Central"/>
</dbReference>
<dbReference type="GO" id="GO:0090090">
    <property type="term" value="P:negative regulation of canonical Wnt signaling pathway"/>
    <property type="evidence" value="ECO:0000250"/>
    <property type="project" value="UniProtKB"/>
</dbReference>
<dbReference type="GO" id="GO:0046322">
    <property type="term" value="P:negative regulation of fatty acid oxidation"/>
    <property type="evidence" value="ECO:0000250"/>
    <property type="project" value="UniProtKB"/>
</dbReference>
<dbReference type="GO" id="GO:0045668">
    <property type="term" value="P:negative regulation of osteoblast differentiation"/>
    <property type="evidence" value="ECO:0000250"/>
    <property type="project" value="UniProtKB"/>
</dbReference>
<dbReference type="GO" id="GO:0000122">
    <property type="term" value="P:negative regulation of transcription by RNA polymerase II"/>
    <property type="evidence" value="ECO:0000318"/>
    <property type="project" value="GO_Central"/>
</dbReference>
<dbReference type="GO" id="GO:0014029">
    <property type="term" value="P:neural crest formation"/>
    <property type="evidence" value="ECO:0000315"/>
    <property type="project" value="UniProtKB"/>
</dbReference>
<dbReference type="GO" id="GO:0048709">
    <property type="term" value="P:oligodendrocyte differentiation"/>
    <property type="evidence" value="ECO:0000318"/>
    <property type="project" value="GO_Central"/>
</dbReference>
<dbReference type="GO" id="GO:0043049">
    <property type="term" value="P:otic placode formation"/>
    <property type="evidence" value="ECO:0000315"/>
    <property type="project" value="UniProtKB"/>
</dbReference>
<dbReference type="GO" id="GO:0032332">
    <property type="term" value="P:positive regulation of chondrocyte differentiation"/>
    <property type="evidence" value="ECO:0000318"/>
    <property type="project" value="GO_Central"/>
</dbReference>
<dbReference type="GO" id="GO:0045893">
    <property type="term" value="P:positive regulation of DNA-templated transcription"/>
    <property type="evidence" value="ECO:0000315"/>
    <property type="project" value="UniProtKB"/>
</dbReference>
<dbReference type="GO" id="GO:0045944">
    <property type="term" value="P:positive regulation of transcription by RNA polymerase II"/>
    <property type="evidence" value="ECO:0000315"/>
    <property type="project" value="UniProtKB"/>
</dbReference>
<dbReference type="GO" id="GO:0070542">
    <property type="term" value="P:response to fatty acid"/>
    <property type="evidence" value="ECO:0000250"/>
    <property type="project" value="UniProtKB"/>
</dbReference>
<dbReference type="CDD" id="cd22031">
    <property type="entry name" value="HMG-box_SoxE"/>
    <property type="match status" value="1"/>
</dbReference>
<dbReference type="FunFam" id="1.10.30.10:FF:000004">
    <property type="entry name" value="Transcription factor SOX-10"/>
    <property type="match status" value="1"/>
</dbReference>
<dbReference type="Gene3D" id="1.10.30.10">
    <property type="entry name" value="High mobility group box domain"/>
    <property type="match status" value="1"/>
</dbReference>
<dbReference type="InterPro" id="IPR009071">
    <property type="entry name" value="HMG_box_dom"/>
</dbReference>
<dbReference type="InterPro" id="IPR036910">
    <property type="entry name" value="HMG_box_dom_sf"/>
</dbReference>
<dbReference type="InterPro" id="IPR022151">
    <property type="entry name" value="Sox_N"/>
</dbReference>
<dbReference type="InterPro" id="IPR050917">
    <property type="entry name" value="SOX_TF"/>
</dbReference>
<dbReference type="PANTHER" id="PTHR45803">
    <property type="entry name" value="SOX100B"/>
    <property type="match status" value="1"/>
</dbReference>
<dbReference type="PANTHER" id="PTHR45803:SF1">
    <property type="entry name" value="TRANSCRIPTION FACTOR SOX-9"/>
    <property type="match status" value="1"/>
</dbReference>
<dbReference type="Pfam" id="PF00505">
    <property type="entry name" value="HMG_box"/>
    <property type="match status" value="1"/>
</dbReference>
<dbReference type="Pfam" id="PF12444">
    <property type="entry name" value="Sox_N"/>
    <property type="match status" value="1"/>
</dbReference>
<dbReference type="SMART" id="SM00398">
    <property type="entry name" value="HMG"/>
    <property type="match status" value="1"/>
</dbReference>
<dbReference type="SUPFAM" id="SSF47095">
    <property type="entry name" value="HMG-box"/>
    <property type="match status" value="1"/>
</dbReference>
<dbReference type="PROSITE" id="PS50118">
    <property type="entry name" value="HMG_BOX_2"/>
    <property type="match status" value="1"/>
</dbReference>
<name>SOX9A_XENLA</name>
<proteinExistence type="evidence at protein level"/>
<comment type="function">
    <text evidence="2 6 7 10 11 12 13">Transcription factor that plays a key role in chondrocytes differentiation and skeletal development (By similarity). Specifically binds the 5'-ACAAAG-3' DNA motif present in enhancers and super-enhancers and promotes expression of genes important for chondrogenesis, including COL2A1 (By similarity). Plays a central role in successive steps of chondrocyte differentiation (By similarity). Absolutely required for precartilaginous condensation, the first step in chondrogenesis during which skeletal progenitors differentiate into prechondrocytes (By similarity). Together with SOX5 and SOX6, required for overt chondrogenesis when condensed prechondrocytes differentiate into early stage chondrocytes, the second step in chondrogenesis (By similarity). Later, required to direct hypertrophic maturation and block osteoblast differentiation of growth plate chondrocytes: maintains chondrocyte columnar proliferation, delays prehypertrophy and then prevents osteoblastic differentiation of chondrocytes (By similarity). Also required for chondrocyte hypertrophy, both indirectly, by keeping the lineage fate of chondrocytes, and directly, by remaining present in upper hypertrophic cells (By similarity). Low lipid levels are the main nutritional determinant for chondrogenic commitment of skeletal progenitor cells: when lipids levels are low, FOXO transcription factors promote expression of SOX9, which induces chondrogenic commitment and suppresses fatty acid oxidation (By similarity). In addition to cartilage development, also acts as a regulator of proliferation and differentiation in epithelial stem/progenitor cells (By similarity). Involved in development of the cranial neural crest, which is fated to form skeletal elements (PubMed:11807034, PubMed:12812785, PubMed:15464575, PubMed:16256735, PubMed:16943273). Also required for otic placode specification during inner ear development (PubMed:15084460).</text>
</comment>
<comment type="subunit">
    <text evidence="12">Interacts with the sumoylation factors ube2i/ubc9 and sumo1.</text>
</comment>
<comment type="subcellular location">
    <subcellularLocation>
        <location evidence="4 6">Nucleus</location>
    </subcellularLocation>
    <subcellularLocation>
        <location evidence="3">Cytoplasm</location>
    </subcellularLocation>
    <text evidence="3 6">Restricted to the nucleus of Sertoli-like cells in the testis, but localizes to the cytoplasm of previtellogenic oocytes in the ovary before being translocated into the nucleus of vitellogenic oocytes.</text>
</comment>
<comment type="tissue specificity">
    <text evidence="6 7 8 9 10 13">From mid-gastrula (stage 10.5-11), expressed in a ring around the blastopore, with expression decreasing toward the dorsal side. At stage 12, expression around the blastopore decreases and begins to increase lateral to the neural plate in the presumptive neural crest, where expression dramatically increases around stage 14. Also expressed in the otic placode as early as stage 13/14. By the tailbud stage expression is restricted to the otic cup and then throughout the otic vesicle, with more intense staining at the dorsal-most region, the prospective region of the semicircular canals and endolymphatic duct. At the early tailbud stage (stage 23), expressed in migrating cranial neural crest cells and in the trunk neural crest. Also expressed in the genital ridges, developing eye, nasal placode and prospective pineal gland. Around stage 25, expression is down-regulated in the trunk neural crest but persists in the migrating cranial crest cells as they populate the pharyngeal arches, otic placode, developing eye, genital ridges and notochord. By stage 31, expression remains strong in the pharyngeal arches. Also expressed in the pancreas; first expressed at stage 25 in the pancreatic anlagen, dorsally in diverticulum. As development proceeds, expression continues in pancreatic tissue, being restricted to ventral and dorsal pancreatic buds.</text>
</comment>
<comment type="developmental stage">
    <text evidence="6">Expressed both maternally and zygotically. Expressed from mid-gastrula (around stage 10.5) and persists at least through to tadpoles (stage 41).</text>
</comment>
<comment type="domain">
    <text evidence="1">The 9aaTAD motif is a transactivation domain present in a large number of yeast and animal transcription factors.</text>
</comment>
<comment type="PTM">
    <text evidence="12">Sumoylated. Lys-365 is the major site of sumoylation, although sumoylation at Lys-61 also occurs. Sumoylation plays a key role in regulating formation of the neural crest and otic placode.</text>
</comment>
<comment type="disruption phenotype">
    <text evidence="6">Loss of neural crest progenitors and an expansion of the neural plate, leading to loss or reduction of neural crest-derived skeletal elements later during development.</text>
</comment>
<organism>
    <name type="scientific">Xenopus laevis</name>
    <name type="common">African clawed frog</name>
    <dbReference type="NCBI Taxonomy" id="8355"/>
    <lineage>
        <taxon>Eukaryota</taxon>
        <taxon>Metazoa</taxon>
        <taxon>Chordata</taxon>
        <taxon>Craniata</taxon>
        <taxon>Vertebrata</taxon>
        <taxon>Euteleostomi</taxon>
        <taxon>Amphibia</taxon>
        <taxon>Batrachia</taxon>
        <taxon>Anura</taxon>
        <taxon>Pipoidea</taxon>
        <taxon>Pipidae</taxon>
        <taxon>Xenopodinae</taxon>
        <taxon>Xenopus</taxon>
        <taxon>Xenopus</taxon>
    </lineage>
</organism>
<evidence type="ECO:0000250" key="1">
    <source>
        <dbReference type="UniProtKB" id="P48436"/>
    </source>
</evidence>
<evidence type="ECO:0000250" key="2">
    <source>
        <dbReference type="UniProtKB" id="Q04887"/>
    </source>
</evidence>
<evidence type="ECO:0000250" key="3">
    <source>
        <dbReference type="UniProtKB" id="Q6F2E7"/>
    </source>
</evidence>
<evidence type="ECO:0000255" key="4">
    <source>
        <dbReference type="PROSITE-ProRule" id="PRU00267"/>
    </source>
</evidence>
<evidence type="ECO:0000256" key="5">
    <source>
        <dbReference type="SAM" id="MobiDB-lite"/>
    </source>
</evidence>
<evidence type="ECO:0000269" key="6">
    <source>
    </source>
</evidence>
<evidence type="ECO:0000269" key="7">
    <source>
    </source>
</evidence>
<evidence type="ECO:0000269" key="8">
    <source>
    </source>
</evidence>
<evidence type="ECO:0000269" key="9">
    <source>
    </source>
</evidence>
<evidence type="ECO:0000269" key="10">
    <source>
    </source>
</evidence>
<evidence type="ECO:0000269" key="11">
    <source>
    </source>
</evidence>
<evidence type="ECO:0000269" key="12">
    <source>
    </source>
</evidence>
<evidence type="ECO:0000269" key="13">
    <source>
    </source>
</evidence>
<evidence type="ECO:0000303" key="14">
    <source>
    </source>
</evidence>
<evidence type="ECO:0000305" key="15"/>
<evidence type="ECO:0000312" key="16">
    <source>
        <dbReference type="EMBL" id="AAI70058.1"/>
    </source>
</evidence>
<evidence type="ECO:0000312" key="17">
    <source>
        <dbReference type="EMBL" id="AAK61366.1"/>
    </source>
</evidence>
<gene>
    <name type="primary">sox9-a</name>
    <name evidence="14" type="synonym">sox9</name>
</gene>
<feature type="chain" id="PRO_0000377415" description="Transcription factor Sox-9-A">
    <location>
        <begin position="1"/>
        <end position="477"/>
    </location>
</feature>
<feature type="DNA-binding region" description="HMG box" evidence="4">
    <location>
        <begin position="105"/>
        <end position="173"/>
    </location>
</feature>
<feature type="region of interest" description="Disordered" evidence="5">
    <location>
        <begin position="1"/>
        <end position="66"/>
    </location>
</feature>
<feature type="region of interest" description="Dimerization (DIM)" evidence="1">
    <location>
        <begin position="63"/>
        <end position="103"/>
    </location>
</feature>
<feature type="region of interest" description="PQA" evidence="1">
    <location>
        <begin position="63"/>
        <end position="103"/>
    </location>
</feature>
<feature type="region of interest" description="Disordered" evidence="5">
    <location>
        <begin position="157"/>
        <end position="274"/>
    </location>
</feature>
<feature type="region of interest" description="Transactivation domain (TAM)" evidence="1">
    <location>
        <begin position="224"/>
        <end position="308"/>
    </location>
</feature>
<feature type="region of interest" description="Disordered" evidence="5">
    <location>
        <begin position="301"/>
        <end position="384"/>
    </location>
</feature>
<feature type="region of interest" description="Transactivation domain (TAC)" evidence="1">
    <location>
        <begin position="361"/>
        <end position="477"/>
    </location>
</feature>
<feature type="region of interest" description="Disordered" evidence="5">
    <location>
        <begin position="446"/>
        <end position="477"/>
    </location>
</feature>
<feature type="short sequence motif" description="9aaTAD 1" evidence="1">
    <location>
        <begin position="276"/>
        <end position="285"/>
    </location>
</feature>
<feature type="short sequence motif" description="9aaTAD 2" evidence="1">
    <location>
        <begin position="291"/>
        <end position="299"/>
    </location>
</feature>
<feature type="short sequence motif" description="9aaTAD 3" evidence="1">
    <location>
        <begin position="428"/>
        <end position="436"/>
    </location>
</feature>
<feature type="compositionally biased region" description="Low complexity" evidence="5">
    <location>
        <begin position="27"/>
        <end position="42"/>
    </location>
</feature>
<feature type="compositionally biased region" description="Basic and acidic residues" evidence="5">
    <location>
        <begin position="56"/>
        <end position="66"/>
    </location>
</feature>
<feature type="compositionally biased region" description="Basic and acidic residues" evidence="5">
    <location>
        <begin position="157"/>
        <end position="174"/>
    </location>
</feature>
<feature type="compositionally biased region" description="Low complexity" evidence="5">
    <location>
        <begin position="211"/>
        <end position="222"/>
    </location>
</feature>
<feature type="compositionally biased region" description="Polar residues" evidence="5">
    <location>
        <begin position="308"/>
        <end position="328"/>
    </location>
</feature>
<feature type="compositionally biased region" description="Polar residues" evidence="5">
    <location>
        <begin position="346"/>
        <end position="361"/>
    </location>
</feature>
<feature type="compositionally biased region" description="Low complexity" evidence="5">
    <location>
        <begin position="370"/>
        <end position="384"/>
    </location>
</feature>
<feature type="compositionally biased region" description="Polar residues" evidence="5">
    <location>
        <begin position="453"/>
        <end position="477"/>
    </location>
</feature>
<feature type="cross-link" description="Glycyl lysine isopeptide (Lys-Gly) (interchain with G-Cter in SUMO)" evidence="12">
    <location>
        <position position="61"/>
    </location>
</feature>
<feature type="cross-link" description="Glycyl lysine isopeptide (Lys-Gly) (interchain with G-Cter in SUMO)" evidence="12">
    <location>
        <position position="365"/>
    </location>
</feature>
<feature type="mutagenesis site" description="Abolishes interaction with sumoylation factors. Alters neural crest formation and inner ear development; when associated with R-365." evidence="12">
    <original>K</original>
    <variation>R</variation>
    <location>
        <position position="61"/>
    </location>
</feature>
<feature type="mutagenesis site" description="Eliminates the major sumoylated product. Alters neural crest formation and inner ear development; when associated with R-61." evidence="12">
    <original>K</original>
    <variation>R</variation>
    <location>
        <position position="365"/>
    </location>
</feature>
<feature type="sequence conflict" description="In Ref. 2; AAI70060." evidence="15" ref="2">
    <original>N</original>
    <variation>Y</variation>
    <location>
        <position position="184"/>
    </location>
</feature>
<feature type="sequence conflict" description="In Ref. 1; AAK61366." evidence="15" ref="1">
    <original>H</original>
    <variation>R</variation>
    <location>
        <position position="268"/>
    </location>
</feature>
<feature type="sequence conflict" description="In Ref. 1; AAK61366." evidence="15" ref="1">
    <original>T</original>
    <variation>I</variation>
    <location>
        <position position="289"/>
    </location>
</feature>
<feature type="sequence conflict" description="In Ref. 1; AAK61366." evidence="15" ref="1">
    <original>W</original>
    <variation>C</variation>
    <location>
        <position position="334"/>
    </location>
</feature>
<protein>
    <recommendedName>
        <fullName evidence="15">Transcription factor Sox-9-A</fullName>
    </recommendedName>
</protein>